<dbReference type="EC" id="1.1.1.-"/>
<dbReference type="EMBL" id="D78509">
    <property type="protein sequence ID" value="BAA24296.1"/>
    <property type="molecule type" value="Genomic_DNA"/>
</dbReference>
<dbReference type="EMBL" id="AF006075">
    <property type="protein sequence ID" value="AAC05582.1"/>
    <property type="molecule type" value="Genomic_DNA"/>
</dbReference>
<dbReference type="EMBL" id="AL009126">
    <property type="protein sequence ID" value="CAB12635.1"/>
    <property type="molecule type" value="Genomic_DNA"/>
</dbReference>
<dbReference type="PIR" id="D69581">
    <property type="entry name" value="D69581"/>
</dbReference>
<dbReference type="RefSeq" id="NP_388687.1">
    <property type="nucleotide sequence ID" value="NC_000964.3"/>
</dbReference>
<dbReference type="RefSeq" id="WP_003242898.1">
    <property type="nucleotide sequence ID" value="NZ_OZ025638.1"/>
</dbReference>
<dbReference type="SMR" id="O31404"/>
<dbReference type="FunCoup" id="O31404">
    <property type="interactions" value="516"/>
</dbReference>
<dbReference type="IntAct" id="O31404">
    <property type="interactions" value="3"/>
</dbReference>
<dbReference type="STRING" id="224308.BSU08060"/>
<dbReference type="jPOST" id="O31404"/>
<dbReference type="PaxDb" id="224308-BSU08060"/>
<dbReference type="EnsemblBacteria" id="CAB12635">
    <property type="protein sequence ID" value="CAB12635"/>
    <property type="gene ID" value="BSU_08060"/>
</dbReference>
<dbReference type="GeneID" id="936152"/>
<dbReference type="KEGG" id="bsu:BSU08060"/>
<dbReference type="PATRIC" id="fig|224308.179.peg.872"/>
<dbReference type="eggNOG" id="COG1071">
    <property type="taxonomic scope" value="Bacteria"/>
</dbReference>
<dbReference type="InParanoid" id="O31404"/>
<dbReference type="OrthoDB" id="9766715at2"/>
<dbReference type="PhylomeDB" id="O31404"/>
<dbReference type="BioCyc" id="BSUB:BSU08060-MONOMER"/>
<dbReference type="UniPathway" id="UPA00040"/>
<dbReference type="Proteomes" id="UP000001570">
    <property type="component" value="Chromosome"/>
</dbReference>
<dbReference type="GO" id="GO:0004739">
    <property type="term" value="F:pyruvate dehydrogenase (acetyl-transferring) activity"/>
    <property type="evidence" value="ECO:0000318"/>
    <property type="project" value="GO_Central"/>
</dbReference>
<dbReference type="GO" id="GO:0045150">
    <property type="term" value="P:acetoin catabolic process"/>
    <property type="evidence" value="ECO:0007669"/>
    <property type="project" value="UniProtKB-UniPathway"/>
</dbReference>
<dbReference type="GO" id="GO:0006086">
    <property type="term" value="P:pyruvate decarboxylation to acetyl-CoA"/>
    <property type="evidence" value="ECO:0000318"/>
    <property type="project" value="GO_Central"/>
</dbReference>
<dbReference type="CDD" id="cd02000">
    <property type="entry name" value="TPP_E1_PDC_ADC_BCADC"/>
    <property type="match status" value="1"/>
</dbReference>
<dbReference type="FunFam" id="3.40.50.970:FF:000013">
    <property type="entry name" value="Pyruvate dehydrogenase E1 component subunit alpha"/>
    <property type="match status" value="1"/>
</dbReference>
<dbReference type="Gene3D" id="3.40.50.970">
    <property type="match status" value="1"/>
</dbReference>
<dbReference type="InterPro" id="IPR001017">
    <property type="entry name" value="DH_E1"/>
</dbReference>
<dbReference type="InterPro" id="IPR050642">
    <property type="entry name" value="PDH_E1_Alpha_Subunit"/>
</dbReference>
<dbReference type="InterPro" id="IPR029061">
    <property type="entry name" value="THDP-binding"/>
</dbReference>
<dbReference type="PANTHER" id="PTHR11516:SF60">
    <property type="entry name" value="PYRUVATE DEHYDROGENASE E1 COMPONENT SUBUNIT ALPHA"/>
    <property type="match status" value="1"/>
</dbReference>
<dbReference type="PANTHER" id="PTHR11516">
    <property type="entry name" value="PYRUVATE DEHYDROGENASE E1 COMPONENT, ALPHA SUBUNIT BACTERIAL AND ORGANELLAR"/>
    <property type="match status" value="1"/>
</dbReference>
<dbReference type="Pfam" id="PF00676">
    <property type="entry name" value="E1_dh"/>
    <property type="match status" value="1"/>
</dbReference>
<dbReference type="SUPFAM" id="SSF52518">
    <property type="entry name" value="Thiamin diphosphate-binding fold (THDP-binding)"/>
    <property type="match status" value="1"/>
</dbReference>
<keyword id="KW-0006">Acetoin catabolism</keyword>
<keyword id="KW-0560">Oxidoreductase</keyword>
<keyword id="KW-1185">Reference proteome</keyword>
<keyword id="KW-0786">Thiamine pyrophosphate</keyword>
<sequence length="333" mass="36069">MKLLKREGLSLTEEKALWMYQKMLEIRGFEDKVHELFAQGVLPGFVHLYAGEEAVAVGVCAHLHDGDSITSTHRGHGHCIAKGCDLDGMMAEIFGKATGLCKGKGGSMHIADLDKGMLGANGIVGGGFTLACGSALTAKYKQTKNVSVCFFGDGANNQGTFHEGLNLAAVWNLPVVFVAENNGYGEATPFEYASACDSIADRAAAYNMPGVTVDGKDILAVYQAAEEAIERARNGGGPSLIECMTYRNYGHFEGDAQTYKTKDERVEHLEEKDAIQGFKNYLLKETDANKLSDIEQRVSESIEKAVSFSEDSPYPKDSELLTDVYVSYEKGGM</sequence>
<gene>
    <name type="primary">acoA</name>
    <name type="synonym">yfjK</name>
    <name type="ordered locus">BSU08060</name>
</gene>
<evidence type="ECO:0000250" key="1"/>
<evidence type="ECO:0000269" key="2">
    <source>
    </source>
</evidence>
<evidence type="ECO:0000269" key="3">
    <source>
    </source>
</evidence>
<evidence type="ECO:0000269" key="4">
    <source>
    </source>
</evidence>
<reference key="1">
    <citation type="journal article" date="1996" name="Microbiology">
        <title>Cloning and sequencing of a 40.6 kb segment in the 73 degrees-76 degrees region of the Bacillus subtilis chromosome containing genes for trehalose metabolism and acetoin utilization.</title>
        <authorList>
            <person name="Yamamoto H."/>
            <person name="Uchiyama S."/>
            <person name="Sekiguchi J."/>
        </authorList>
    </citation>
    <scope>NUCLEOTIDE SEQUENCE [GENOMIC DNA]</scope>
    <source>
        <strain>168 / AC327</strain>
    </source>
</reference>
<reference key="2">
    <citation type="journal article" date="1999" name="J. Bacteriol.">
        <title>Biochemical and molecular characterization of the Bacillus subtilis acetoin catabolic pathway.</title>
        <authorList>
            <person name="Huang M."/>
            <person name="Oppermann-Sanio F.B."/>
            <person name="Steinbuechel A."/>
        </authorList>
    </citation>
    <scope>NUCLEOTIDE SEQUENCE [GENOMIC DNA]</scope>
    <scope>PATHWAY</scope>
    <scope>DISRUPTION PHENOTYPE</scope>
    <source>
        <strain>168 / ATCC 33234 / DSM 402 / NBRC 111470 / NCIMB 10106</strain>
    </source>
</reference>
<reference key="3">
    <citation type="journal article" date="1997" name="Nature">
        <title>The complete genome sequence of the Gram-positive bacterium Bacillus subtilis.</title>
        <authorList>
            <person name="Kunst F."/>
            <person name="Ogasawara N."/>
            <person name="Moszer I."/>
            <person name="Albertini A.M."/>
            <person name="Alloni G."/>
            <person name="Azevedo V."/>
            <person name="Bertero M.G."/>
            <person name="Bessieres P."/>
            <person name="Bolotin A."/>
            <person name="Borchert S."/>
            <person name="Borriss R."/>
            <person name="Boursier L."/>
            <person name="Brans A."/>
            <person name="Braun M."/>
            <person name="Brignell S.C."/>
            <person name="Bron S."/>
            <person name="Brouillet S."/>
            <person name="Bruschi C.V."/>
            <person name="Caldwell B."/>
            <person name="Capuano V."/>
            <person name="Carter N.M."/>
            <person name="Choi S.-K."/>
            <person name="Codani J.-J."/>
            <person name="Connerton I.F."/>
            <person name="Cummings N.J."/>
            <person name="Daniel R.A."/>
            <person name="Denizot F."/>
            <person name="Devine K.M."/>
            <person name="Duesterhoeft A."/>
            <person name="Ehrlich S.D."/>
            <person name="Emmerson P.T."/>
            <person name="Entian K.-D."/>
            <person name="Errington J."/>
            <person name="Fabret C."/>
            <person name="Ferrari E."/>
            <person name="Foulger D."/>
            <person name="Fritz C."/>
            <person name="Fujita M."/>
            <person name="Fujita Y."/>
            <person name="Fuma S."/>
            <person name="Galizzi A."/>
            <person name="Galleron N."/>
            <person name="Ghim S.-Y."/>
            <person name="Glaser P."/>
            <person name="Goffeau A."/>
            <person name="Golightly E.J."/>
            <person name="Grandi G."/>
            <person name="Guiseppi G."/>
            <person name="Guy B.J."/>
            <person name="Haga K."/>
            <person name="Haiech J."/>
            <person name="Harwood C.R."/>
            <person name="Henaut A."/>
            <person name="Hilbert H."/>
            <person name="Holsappel S."/>
            <person name="Hosono S."/>
            <person name="Hullo M.-F."/>
            <person name="Itaya M."/>
            <person name="Jones L.-M."/>
            <person name="Joris B."/>
            <person name="Karamata D."/>
            <person name="Kasahara Y."/>
            <person name="Klaerr-Blanchard M."/>
            <person name="Klein C."/>
            <person name="Kobayashi Y."/>
            <person name="Koetter P."/>
            <person name="Koningstein G."/>
            <person name="Krogh S."/>
            <person name="Kumano M."/>
            <person name="Kurita K."/>
            <person name="Lapidus A."/>
            <person name="Lardinois S."/>
            <person name="Lauber J."/>
            <person name="Lazarevic V."/>
            <person name="Lee S.-M."/>
            <person name="Levine A."/>
            <person name="Liu H."/>
            <person name="Masuda S."/>
            <person name="Mauel C."/>
            <person name="Medigue C."/>
            <person name="Medina N."/>
            <person name="Mellado R.P."/>
            <person name="Mizuno M."/>
            <person name="Moestl D."/>
            <person name="Nakai S."/>
            <person name="Noback M."/>
            <person name="Noone D."/>
            <person name="O'Reilly M."/>
            <person name="Ogawa K."/>
            <person name="Ogiwara A."/>
            <person name="Oudega B."/>
            <person name="Park S.-H."/>
            <person name="Parro V."/>
            <person name="Pohl T.M."/>
            <person name="Portetelle D."/>
            <person name="Porwollik S."/>
            <person name="Prescott A.M."/>
            <person name="Presecan E."/>
            <person name="Pujic P."/>
            <person name="Purnelle B."/>
            <person name="Rapoport G."/>
            <person name="Rey M."/>
            <person name="Reynolds S."/>
            <person name="Rieger M."/>
            <person name="Rivolta C."/>
            <person name="Rocha E."/>
            <person name="Roche B."/>
            <person name="Rose M."/>
            <person name="Sadaie Y."/>
            <person name="Sato T."/>
            <person name="Scanlan E."/>
            <person name="Schleich S."/>
            <person name="Schroeter R."/>
            <person name="Scoffone F."/>
            <person name="Sekiguchi J."/>
            <person name="Sekowska A."/>
            <person name="Seror S.J."/>
            <person name="Serror P."/>
            <person name="Shin B.-S."/>
            <person name="Soldo B."/>
            <person name="Sorokin A."/>
            <person name="Tacconi E."/>
            <person name="Takagi T."/>
            <person name="Takahashi H."/>
            <person name="Takemaru K."/>
            <person name="Takeuchi M."/>
            <person name="Tamakoshi A."/>
            <person name="Tanaka T."/>
            <person name="Terpstra P."/>
            <person name="Tognoni A."/>
            <person name="Tosato V."/>
            <person name="Uchiyama S."/>
            <person name="Vandenbol M."/>
            <person name="Vannier F."/>
            <person name="Vassarotti A."/>
            <person name="Viari A."/>
            <person name="Wambutt R."/>
            <person name="Wedler E."/>
            <person name="Wedler H."/>
            <person name="Weitzenegger T."/>
            <person name="Winters P."/>
            <person name="Wipat A."/>
            <person name="Yamamoto H."/>
            <person name="Yamane K."/>
            <person name="Yasumoto K."/>
            <person name="Yata K."/>
            <person name="Yoshida K."/>
            <person name="Yoshikawa H.-F."/>
            <person name="Zumstein E."/>
            <person name="Yoshikawa H."/>
            <person name="Danchin A."/>
        </authorList>
    </citation>
    <scope>NUCLEOTIDE SEQUENCE [LARGE SCALE GENOMIC DNA]</scope>
    <source>
        <strain>168</strain>
    </source>
</reference>
<reference key="4">
    <citation type="journal article" date="2001" name="J. Bacteriol.">
        <title>Regulation of the acetoin catabolic pathway is controlled by sigma L in Bacillus subtilis.</title>
        <authorList>
            <person name="Ali N.O."/>
            <person name="Bignon J."/>
            <person name="Rapoport G."/>
            <person name="Debarbouille M."/>
        </authorList>
    </citation>
    <scope>INDUCTION</scope>
    <source>
        <strain>168</strain>
    </source>
</reference>
<reference key="5">
    <citation type="journal article" date="2001" name="Nucleic Acids Res.">
        <title>Combined transcriptome and proteome analysis as a powerful approach to study genes under glucose repression in Bacillus subtilis.</title>
        <authorList>
            <person name="Yoshida K."/>
            <person name="Kobayashi K."/>
            <person name="Miwa Y."/>
            <person name="Kang C.-M."/>
            <person name="Matsunaga M."/>
            <person name="Yamaguchi H."/>
            <person name="Tojo S."/>
            <person name="Yamamoto M."/>
            <person name="Nishi R."/>
            <person name="Ogasawara N."/>
            <person name="Nakayama T."/>
            <person name="Fujita Y."/>
        </authorList>
    </citation>
    <scope>INDUCTION</scope>
    <source>
        <strain>168</strain>
    </source>
</reference>
<name>ACOA_BACSU</name>
<protein>
    <recommendedName>
        <fullName>Acetoin:2,6-dichlorophenolindophenol oxidoreductase subunit alpha</fullName>
        <shortName>Acetoin:DCPIP oxidoreductase-alpha</shortName>
        <shortName>Ao:DCPIP OR</shortName>
        <ecNumber>1.1.1.-</ecNumber>
    </recommendedName>
    <alternativeName>
        <fullName>TPP-dependent acetoin dehydrogenase E1 subunit alpha</fullName>
    </alternativeName>
</protein>
<comment type="function">
    <text evidence="1">Catalyzes the 2,6-dichlorophenolindophenol-dependent cleavage of acetoin into acetate and acetaldehyde. The alpha subunit is probably the catalytic subunit of the enzyme (By similarity).</text>
</comment>
<comment type="cofactor">
    <cofactor evidence="1">
        <name>thiamine diphosphate</name>
        <dbReference type="ChEBI" id="CHEBI:58937"/>
    </cofactor>
</comment>
<comment type="pathway">
    <text evidence="2">Ketone degradation; acetoin degradation.</text>
</comment>
<comment type="subunit">
    <text evidence="1">Tetramer of 2 alpha and 2 beta subunits.</text>
</comment>
<comment type="induction">
    <text evidence="3 4">Strongly induced by acetoin. Transcriptionally up-regulated by AcoR and sigma-L factor. Subject to catabolite repression by glucose, in a CcpA-independent manner.</text>
</comment>
<comment type="disruption phenotype">
    <text evidence="2">Cells lacking this gene are unable to utilize acetoin as carbon source.</text>
</comment>
<accession>O31404</accession>
<accession>O31549</accession>
<accession>Q797A1</accession>
<proteinExistence type="evidence at transcript level"/>
<organism>
    <name type="scientific">Bacillus subtilis (strain 168)</name>
    <dbReference type="NCBI Taxonomy" id="224308"/>
    <lineage>
        <taxon>Bacteria</taxon>
        <taxon>Bacillati</taxon>
        <taxon>Bacillota</taxon>
        <taxon>Bacilli</taxon>
        <taxon>Bacillales</taxon>
        <taxon>Bacillaceae</taxon>
        <taxon>Bacillus</taxon>
    </lineage>
</organism>
<feature type="chain" id="PRO_0000388966" description="Acetoin:2,6-dichlorophenolindophenol oxidoreductase subunit alpha">
    <location>
        <begin position="1"/>
        <end position="333"/>
    </location>
</feature>